<organism>
    <name type="scientific">Lactiplantibacillus plantarum (strain ATCC BAA-793 / NCIMB 8826 / WCFS1)</name>
    <name type="common">Lactobacillus plantarum</name>
    <dbReference type="NCBI Taxonomy" id="220668"/>
    <lineage>
        <taxon>Bacteria</taxon>
        <taxon>Bacillati</taxon>
        <taxon>Bacillota</taxon>
        <taxon>Bacilli</taxon>
        <taxon>Lactobacillales</taxon>
        <taxon>Lactobacillaceae</taxon>
        <taxon>Lactiplantibacillus</taxon>
    </lineage>
</organism>
<feature type="chain" id="PRO_0000322406" description="Chorismate synthase">
    <location>
        <begin position="1"/>
        <end position="389"/>
    </location>
</feature>
<feature type="binding site" evidence="1">
    <location>
        <position position="40"/>
    </location>
    <ligand>
        <name>NADP(+)</name>
        <dbReference type="ChEBI" id="CHEBI:58349"/>
    </ligand>
</feature>
<feature type="binding site" evidence="1">
    <location>
        <position position="46"/>
    </location>
    <ligand>
        <name>NADP(+)</name>
        <dbReference type="ChEBI" id="CHEBI:58349"/>
    </ligand>
</feature>
<feature type="binding site" evidence="1">
    <location>
        <begin position="131"/>
        <end position="133"/>
    </location>
    <ligand>
        <name>FMN</name>
        <dbReference type="ChEBI" id="CHEBI:58210"/>
    </ligand>
</feature>
<feature type="binding site" evidence="1">
    <location>
        <begin position="252"/>
        <end position="253"/>
    </location>
    <ligand>
        <name>FMN</name>
        <dbReference type="ChEBI" id="CHEBI:58210"/>
    </ligand>
</feature>
<feature type="binding site" evidence="1">
    <location>
        <position position="297"/>
    </location>
    <ligand>
        <name>FMN</name>
        <dbReference type="ChEBI" id="CHEBI:58210"/>
    </ligand>
</feature>
<feature type="binding site" evidence="1">
    <location>
        <begin position="312"/>
        <end position="316"/>
    </location>
    <ligand>
        <name>FMN</name>
        <dbReference type="ChEBI" id="CHEBI:58210"/>
    </ligand>
</feature>
<feature type="binding site" evidence="1">
    <location>
        <position position="338"/>
    </location>
    <ligand>
        <name>FMN</name>
        <dbReference type="ChEBI" id="CHEBI:58210"/>
    </ligand>
</feature>
<sequence>MINYVTAGESHGPQLTGVLTGIPAGLQLDIDAINTGLAARQGGFGRGNRQQIEHDTVQIIGGVRHGVTLGSPIALTIMNRDHAHWAAIMDPVSPATATNTLRQVTRPRPGHADLVGGMKYGHRDLRNVLERSSARETAMRVAIGQICKQLLAQLDIHLVGYVQQIGPKQVTADLTLSVDQLQAQIAQNDLRLPDAALVPEIHELITATKKAGDTLGGVIRVVAENVPAGLGSYTNWDTKLDGQLAAAVMGVNAMKGVEIGDGFAAASHYGSQVMDEISWDEHAGWSRLTNHLGGFEGGMTNGMPIVVKAAMKPIPTLYKPLQSVDIATKVSQKASVERSDTTAIVPASIVVESVVAIELTRALTATFDGSNLARLQQTVTAYREELRQY</sequence>
<comment type="function">
    <text evidence="1">Catalyzes the anti-1,4-elimination of the C-3 phosphate and the C-6 proR hydrogen from 5-enolpyruvylshikimate-3-phosphate (EPSP) to yield chorismate, which is the branch point compound that serves as the starting substrate for the three terminal pathways of aromatic amino acid biosynthesis. This reaction introduces a second double bond into the aromatic ring system.</text>
</comment>
<comment type="catalytic activity">
    <reaction evidence="1">
        <text>5-O-(1-carboxyvinyl)-3-phosphoshikimate = chorismate + phosphate</text>
        <dbReference type="Rhea" id="RHEA:21020"/>
        <dbReference type="ChEBI" id="CHEBI:29748"/>
        <dbReference type="ChEBI" id="CHEBI:43474"/>
        <dbReference type="ChEBI" id="CHEBI:57701"/>
        <dbReference type="EC" id="4.2.3.5"/>
    </reaction>
</comment>
<comment type="cofactor">
    <cofactor evidence="1">
        <name>FMNH2</name>
        <dbReference type="ChEBI" id="CHEBI:57618"/>
    </cofactor>
    <text evidence="1">Reduced FMN (FMNH(2)).</text>
</comment>
<comment type="pathway">
    <text evidence="1">Metabolic intermediate biosynthesis; chorismate biosynthesis; chorismate from D-erythrose 4-phosphate and phosphoenolpyruvate: step 7/7.</text>
</comment>
<comment type="subunit">
    <text evidence="1">Homotetramer.</text>
</comment>
<comment type="similarity">
    <text evidence="1">Belongs to the chorismate synthase family.</text>
</comment>
<protein>
    <recommendedName>
        <fullName evidence="1">Chorismate synthase</fullName>
        <shortName evidence="1">CS</shortName>
        <ecNumber evidence="1">4.2.3.5</ecNumber>
    </recommendedName>
    <alternativeName>
        <fullName evidence="1">5-enolpyruvylshikimate-3-phosphate phospholyase</fullName>
    </alternativeName>
</protein>
<accession>Q88VL0</accession>
<accession>F9UPZ4</accession>
<reference key="1">
    <citation type="journal article" date="2003" name="Proc. Natl. Acad. Sci. U.S.A.">
        <title>Complete genome sequence of Lactobacillus plantarum WCFS1.</title>
        <authorList>
            <person name="Kleerebezem M."/>
            <person name="Boekhorst J."/>
            <person name="van Kranenburg R."/>
            <person name="Molenaar D."/>
            <person name="Kuipers O.P."/>
            <person name="Leer R."/>
            <person name="Tarchini R."/>
            <person name="Peters S.A."/>
            <person name="Sandbrink H.M."/>
            <person name="Fiers M.W.E.J."/>
            <person name="Stiekema W."/>
            <person name="Klein Lankhorst R.M."/>
            <person name="Bron P.A."/>
            <person name="Hoffer S.M."/>
            <person name="Nierop Groot M.N."/>
            <person name="Kerkhoven R."/>
            <person name="De Vries M."/>
            <person name="Ursing B."/>
            <person name="De Vos W.M."/>
            <person name="Siezen R.J."/>
        </authorList>
    </citation>
    <scope>NUCLEOTIDE SEQUENCE [LARGE SCALE GENOMIC DNA]</scope>
    <source>
        <strain>ATCC BAA-793 / NCIMB 8826 / WCFS1</strain>
    </source>
</reference>
<reference key="2">
    <citation type="journal article" date="2012" name="J. Bacteriol.">
        <title>Complete resequencing and reannotation of the Lactobacillus plantarum WCFS1 genome.</title>
        <authorList>
            <person name="Siezen R.J."/>
            <person name="Francke C."/>
            <person name="Renckens B."/>
            <person name="Boekhorst J."/>
            <person name="Wels M."/>
            <person name="Kleerebezem M."/>
            <person name="van Hijum S.A."/>
        </authorList>
    </citation>
    <scope>NUCLEOTIDE SEQUENCE [LARGE SCALE GENOMIC DNA]</scope>
    <scope>GENOME REANNOTATION</scope>
    <source>
        <strain>ATCC BAA-793 / NCIMB 8826 / WCFS1</strain>
    </source>
</reference>
<evidence type="ECO:0000255" key="1">
    <source>
        <dbReference type="HAMAP-Rule" id="MF_00300"/>
    </source>
</evidence>
<gene>
    <name evidence="1" type="primary">aroC</name>
    <name type="ordered locus">lp_2037</name>
</gene>
<proteinExistence type="inferred from homology"/>
<dbReference type="EC" id="4.2.3.5" evidence="1"/>
<dbReference type="EMBL" id="AL935263">
    <property type="protein sequence ID" value="CCC79283.1"/>
    <property type="molecule type" value="Genomic_DNA"/>
</dbReference>
<dbReference type="RefSeq" id="WP_003644493.1">
    <property type="nucleotide sequence ID" value="NC_004567.2"/>
</dbReference>
<dbReference type="RefSeq" id="YP_004889797.1">
    <property type="nucleotide sequence ID" value="NC_004567.2"/>
</dbReference>
<dbReference type="SMR" id="Q88VL0"/>
<dbReference type="STRING" id="220668.lp_2037"/>
<dbReference type="EnsemblBacteria" id="CCC79283">
    <property type="protein sequence ID" value="CCC79283"/>
    <property type="gene ID" value="lp_2037"/>
</dbReference>
<dbReference type="GeneID" id="77218359"/>
<dbReference type="KEGG" id="lpl:lp_2037"/>
<dbReference type="PATRIC" id="fig|220668.9.peg.1722"/>
<dbReference type="eggNOG" id="COG0082">
    <property type="taxonomic scope" value="Bacteria"/>
</dbReference>
<dbReference type="HOGENOM" id="CLU_034547_2_0_9"/>
<dbReference type="OrthoDB" id="9771806at2"/>
<dbReference type="PhylomeDB" id="Q88VL0"/>
<dbReference type="UniPathway" id="UPA00053">
    <property type="reaction ID" value="UER00090"/>
</dbReference>
<dbReference type="Proteomes" id="UP000000432">
    <property type="component" value="Chromosome"/>
</dbReference>
<dbReference type="GO" id="GO:0005829">
    <property type="term" value="C:cytosol"/>
    <property type="evidence" value="ECO:0007669"/>
    <property type="project" value="TreeGrafter"/>
</dbReference>
<dbReference type="GO" id="GO:0004107">
    <property type="term" value="F:chorismate synthase activity"/>
    <property type="evidence" value="ECO:0007669"/>
    <property type="project" value="UniProtKB-UniRule"/>
</dbReference>
<dbReference type="GO" id="GO:0010181">
    <property type="term" value="F:FMN binding"/>
    <property type="evidence" value="ECO:0007669"/>
    <property type="project" value="TreeGrafter"/>
</dbReference>
<dbReference type="GO" id="GO:0008652">
    <property type="term" value="P:amino acid biosynthetic process"/>
    <property type="evidence" value="ECO:0007669"/>
    <property type="project" value="UniProtKB-KW"/>
</dbReference>
<dbReference type="GO" id="GO:0009073">
    <property type="term" value="P:aromatic amino acid family biosynthetic process"/>
    <property type="evidence" value="ECO:0007669"/>
    <property type="project" value="UniProtKB-KW"/>
</dbReference>
<dbReference type="GO" id="GO:0009423">
    <property type="term" value="P:chorismate biosynthetic process"/>
    <property type="evidence" value="ECO:0007669"/>
    <property type="project" value="UniProtKB-UniRule"/>
</dbReference>
<dbReference type="CDD" id="cd07304">
    <property type="entry name" value="Chorismate_synthase"/>
    <property type="match status" value="1"/>
</dbReference>
<dbReference type="FunFam" id="3.60.150.10:FF:000002">
    <property type="entry name" value="Chorismate synthase"/>
    <property type="match status" value="1"/>
</dbReference>
<dbReference type="Gene3D" id="3.60.150.10">
    <property type="entry name" value="Chorismate synthase AroC"/>
    <property type="match status" value="1"/>
</dbReference>
<dbReference type="HAMAP" id="MF_00300">
    <property type="entry name" value="Chorismate_synth"/>
    <property type="match status" value="1"/>
</dbReference>
<dbReference type="InterPro" id="IPR000453">
    <property type="entry name" value="Chorismate_synth"/>
</dbReference>
<dbReference type="InterPro" id="IPR035904">
    <property type="entry name" value="Chorismate_synth_AroC_sf"/>
</dbReference>
<dbReference type="InterPro" id="IPR020541">
    <property type="entry name" value="Chorismate_synthase_CS"/>
</dbReference>
<dbReference type="NCBIfam" id="TIGR00033">
    <property type="entry name" value="aroC"/>
    <property type="match status" value="1"/>
</dbReference>
<dbReference type="NCBIfam" id="NF003793">
    <property type="entry name" value="PRK05382.1"/>
    <property type="match status" value="1"/>
</dbReference>
<dbReference type="PANTHER" id="PTHR21085">
    <property type="entry name" value="CHORISMATE SYNTHASE"/>
    <property type="match status" value="1"/>
</dbReference>
<dbReference type="PANTHER" id="PTHR21085:SF0">
    <property type="entry name" value="CHORISMATE SYNTHASE"/>
    <property type="match status" value="1"/>
</dbReference>
<dbReference type="Pfam" id="PF01264">
    <property type="entry name" value="Chorismate_synt"/>
    <property type="match status" value="1"/>
</dbReference>
<dbReference type="PIRSF" id="PIRSF001456">
    <property type="entry name" value="Chorismate_synth"/>
    <property type="match status" value="1"/>
</dbReference>
<dbReference type="SUPFAM" id="SSF103263">
    <property type="entry name" value="Chorismate synthase, AroC"/>
    <property type="match status" value="1"/>
</dbReference>
<dbReference type="PROSITE" id="PS00787">
    <property type="entry name" value="CHORISMATE_SYNTHASE_1"/>
    <property type="match status" value="1"/>
</dbReference>
<name>AROC_LACPL</name>
<keyword id="KW-0028">Amino-acid biosynthesis</keyword>
<keyword id="KW-0057">Aromatic amino acid biosynthesis</keyword>
<keyword id="KW-0274">FAD</keyword>
<keyword id="KW-0285">Flavoprotein</keyword>
<keyword id="KW-0288">FMN</keyword>
<keyword id="KW-0456">Lyase</keyword>
<keyword id="KW-0521">NADP</keyword>
<keyword id="KW-1185">Reference proteome</keyword>